<protein>
    <recommendedName>
        <fullName evidence="1">DNA-directed RNA polymerase subunit beta</fullName>
        <shortName evidence="1">RNAP subunit beta</shortName>
        <ecNumber evidence="1">2.7.7.6</ecNumber>
    </recommendedName>
    <alternativeName>
        <fullName evidence="1">RNA polymerase subunit beta</fullName>
    </alternativeName>
    <alternativeName>
        <fullName evidence="1">Transcriptase subunit beta</fullName>
    </alternativeName>
</protein>
<keyword id="KW-0240">DNA-directed RNA polymerase</keyword>
<keyword id="KW-0548">Nucleotidyltransferase</keyword>
<keyword id="KW-1185">Reference proteome</keyword>
<keyword id="KW-0804">Transcription</keyword>
<keyword id="KW-0808">Transferase</keyword>
<gene>
    <name evidence="1" type="primary">rpoB</name>
    <name type="ordered locus">H16_A3497</name>
</gene>
<organism>
    <name type="scientific">Cupriavidus necator (strain ATCC 17699 / DSM 428 / KCTC 22496 / NCIMB 10442 / H16 / Stanier 337)</name>
    <name type="common">Ralstonia eutropha</name>
    <dbReference type="NCBI Taxonomy" id="381666"/>
    <lineage>
        <taxon>Bacteria</taxon>
        <taxon>Pseudomonadati</taxon>
        <taxon>Pseudomonadota</taxon>
        <taxon>Betaproteobacteria</taxon>
        <taxon>Burkholderiales</taxon>
        <taxon>Burkholderiaceae</taxon>
        <taxon>Cupriavidus</taxon>
    </lineage>
</organism>
<feature type="chain" id="PRO_0000300380" description="DNA-directed RNA polymerase subunit beta">
    <location>
        <begin position="1"/>
        <end position="1368"/>
    </location>
</feature>
<name>RPOB_CUPNH</name>
<dbReference type="EC" id="2.7.7.6" evidence="1"/>
<dbReference type="EMBL" id="AM260479">
    <property type="protein sequence ID" value="CAJ94565.1"/>
    <property type="molecule type" value="Genomic_DNA"/>
</dbReference>
<dbReference type="RefSeq" id="WP_010810463.1">
    <property type="nucleotide sequence ID" value="NZ_CP039287.1"/>
</dbReference>
<dbReference type="SMR" id="Q0K606"/>
<dbReference type="STRING" id="381666.H16_A3497"/>
<dbReference type="KEGG" id="reh:H16_A3497"/>
<dbReference type="eggNOG" id="COG0085">
    <property type="taxonomic scope" value="Bacteria"/>
</dbReference>
<dbReference type="HOGENOM" id="CLU_000524_4_0_4"/>
<dbReference type="OrthoDB" id="9803954at2"/>
<dbReference type="Proteomes" id="UP000008210">
    <property type="component" value="Chromosome 1"/>
</dbReference>
<dbReference type="GO" id="GO:0000428">
    <property type="term" value="C:DNA-directed RNA polymerase complex"/>
    <property type="evidence" value="ECO:0007669"/>
    <property type="project" value="UniProtKB-KW"/>
</dbReference>
<dbReference type="GO" id="GO:0003677">
    <property type="term" value="F:DNA binding"/>
    <property type="evidence" value="ECO:0007669"/>
    <property type="project" value="UniProtKB-UniRule"/>
</dbReference>
<dbReference type="GO" id="GO:0003899">
    <property type="term" value="F:DNA-directed RNA polymerase activity"/>
    <property type="evidence" value="ECO:0007669"/>
    <property type="project" value="UniProtKB-UniRule"/>
</dbReference>
<dbReference type="GO" id="GO:0032549">
    <property type="term" value="F:ribonucleoside binding"/>
    <property type="evidence" value="ECO:0007669"/>
    <property type="project" value="InterPro"/>
</dbReference>
<dbReference type="GO" id="GO:0006351">
    <property type="term" value="P:DNA-templated transcription"/>
    <property type="evidence" value="ECO:0007669"/>
    <property type="project" value="UniProtKB-UniRule"/>
</dbReference>
<dbReference type="CDD" id="cd00653">
    <property type="entry name" value="RNA_pol_B_RPB2"/>
    <property type="match status" value="1"/>
</dbReference>
<dbReference type="FunFam" id="2.40.50.100:FF:000006">
    <property type="entry name" value="DNA-directed RNA polymerase subunit beta"/>
    <property type="match status" value="1"/>
</dbReference>
<dbReference type="FunFam" id="2.40.50.150:FF:000001">
    <property type="entry name" value="DNA-directed RNA polymerase subunit beta"/>
    <property type="match status" value="1"/>
</dbReference>
<dbReference type="FunFam" id="3.90.1800.10:FF:000001">
    <property type="entry name" value="DNA-directed RNA polymerase subunit beta"/>
    <property type="match status" value="1"/>
</dbReference>
<dbReference type="Gene3D" id="2.40.50.100">
    <property type="match status" value="1"/>
</dbReference>
<dbReference type="Gene3D" id="2.40.50.150">
    <property type="match status" value="1"/>
</dbReference>
<dbReference type="Gene3D" id="3.90.1100.10">
    <property type="match status" value="2"/>
</dbReference>
<dbReference type="Gene3D" id="2.30.150.10">
    <property type="entry name" value="DNA-directed RNA polymerase, beta subunit, external 1 domain"/>
    <property type="match status" value="1"/>
</dbReference>
<dbReference type="Gene3D" id="2.40.270.10">
    <property type="entry name" value="DNA-directed RNA polymerase, subunit 2, domain 6"/>
    <property type="match status" value="1"/>
</dbReference>
<dbReference type="Gene3D" id="3.90.1800.10">
    <property type="entry name" value="RNA polymerase alpha subunit dimerisation domain"/>
    <property type="match status" value="1"/>
</dbReference>
<dbReference type="Gene3D" id="3.90.1110.10">
    <property type="entry name" value="RNA polymerase Rpb2, domain 2"/>
    <property type="match status" value="1"/>
</dbReference>
<dbReference type="HAMAP" id="MF_01321">
    <property type="entry name" value="RNApol_bact_RpoB"/>
    <property type="match status" value="1"/>
</dbReference>
<dbReference type="InterPro" id="IPR042107">
    <property type="entry name" value="DNA-dir_RNA_pol_bsu_ext_1_sf"/>
</dbReference>
<dbReference type="InterPro" id="IPR019462">
    <property type="entry name" value="DNA-dir_RNA_pol_bsu_external_1"/>
</dbReference>
<dbReference type="InterPro" id="IPR015712">
    <property type="entry name" value="DNA-dir_RNA_pol_su2"/>
</dbReference>
<dbReference type="InterPro" id="IPR007120">
    <property type="entry name" value="DNA-dir_RNAP_su2_dom"/>
</dbReference>
<dbReference type="InterPro" id="IPR037033">
    <property type="entry name" value="DNA-dir_RNAP_su2_hyb_sf"/>
</dbReference>
<dbReference type="InterPro" id="IPR010243">
    <property type="entry name" value="RNA_pol_bsu_bac"/>
</dbReference>
<dbReference type="InterPro" id="IPR007121">
    <property type="entry name" value="RNA_pol_bsu_CS"/>
</dbReference>
<dbReference type="InterPro" id="IPR007644">
    <property type="entry name" value="RNA_pol_bsu_protrusion"/>
</dbReference>
<dbReference type="InterPro" id="IPR007642">
    <property type="entry name" value="RNA_pol_Rpb2_2"/>
</dbReference>
<dbReference type="InterPro" id="IPR037034">
    <property type="entry name" value="RNA_pol_Rpb2_2_sf"/>
</dbReference>
<dbReference type="InterPro" id="IPR007645">
    <property type="entry name" value="RNA_pol_Rpb2_3"/>
</dbReference>
<dbReference type="InterPro" id="IPR007641">
    <property type="entry name" value="RNA_pol_Rpb2_7"/>
</dbReference>
<dbReference type="InterPro" id="IPR014724">
    <property type="entry name" value="RNA_pol_RPB2_OB-fold"/>
</dbReference>
<dbReference type="NCBIfam" id="NF001616">
    <property type="entry name" value="PRK00405.1"/>
    <property type="match status" value="1"/>
</dbReference>
<dbReference type="NCBIfam" id="TIGR02013">
    <property type="entry name" value="rpoB"/>
    <property type="match status" value="1"/>
</dbReference>
<dbReference type="PANTHER" id="PTHR20856">
    <property type="entry name" value="DNA-DIRECTED RNA POLYMERASE I SUBUNIT 2"/>
    <property type="match status" value="1"/>
</dbReference>
<dbReference type="Pfam" id="PF04563">
    <property type="entry name" value="RNA_pol_Rpb2_1"/>
    <property type="match status" value="1"/>
</dbReference>
<dbReference type="Pfam" id="PF04561">
    <property type="entry name" value="RNA_pol_Rpb2_2"/>
    <property type="match status" value="2"/>
</dbReference>
<dbReference type="Pfam" id="PF04565">
    <property type="entry name" value="RNA_pol_Rpb2_3"/>
    <property type="match status" value="1"/>
</dbReference>
<dbReference type="Pfam" id="PF10385">
    <property type="entry name" value="RNA_pol_Rpb2_45"/>
    <property type="match status" value="1"/>
</dbReference>
<dbReference type="Pfam" id="PF00562">
    <property type="entry name" value="RNA_pol_Rpb2_6"/>
    <property type="match status" value="1"/>
</dbReference>
<dbReference type="Pfam" id="PF04560">
    <property type="entry name" value="RNA_pol_Rpb2_7"/>
    <property type="match status" value="1"/>
</dbReference>
<dbReference type="SUPFAM" id="SSF64484">
    <property type="entry name" value="beta and beta-prime subunits of DNA dependent RNA-polymerase"/>
    <property type="match status" value="1"/>
</dbReference>
<dbReference type="PROSITE" id="PS01166">
    <property type="entry name" value="RNA_POL_BETA"/>
    <property type="match status" value="1"/>
</dbReference>
<reference key="1">
    <citation type="journal article" date="2006" name="Nat. Biotechnol.">
        <title>Genome sequence of the bioplastic-producing 'Knallgas' bacterium Ralstonia eutropha H16.</title>
        <authorList>
            <person name="Pohlmann A."/>
            <person name="Fricke W.F."/>
            <person name="Reinecke F."/>
            <person name="Kusian B."/>
            <person name="Liesegang H."/>
            <person name="Cramm R."/>
            <person name="Eitinger T."/>
            <person name="Ewering C."/>
            <person name="Poetter M."/>
            <person name="Schwartz E."/>
            <person name="Strittmatter A."/>
            <person name="Voss I."/>
            <person name="Gottschalk G."/>
            <person name="Steinbuechel A."/>
            <person name="Friedrich B."/>
            <person name="Bowien B."/>
        </authorList>
    </citation>
    <scope>NUCLEOTIDE SEQUENCE [LARGE SCALE GENOMIC DNA]</scope>
    <source>
        <strain>ATCC 17699 / DSM 428 / KCTC 22496 / NCIMB 10442 / H16 / Stanier 337</strain>
    </source>
</reference>
<accession>Q0K606</accession>
<proteinExistence type="inferred from homology"/>
<comment type="function">
    <text evidence="1">DNA-dependent RNA polymerase catalyzes the transcription of DNA into RNA using the four ribonucleoside triphosphates as substrates.</text>
</comment>
<comment type="catalytic activity">
    <reaction evidence="1">
        <text>RNA(n) + a ribonucleoside 5'-triphosphate = RNA(n+1) + diphosphate</text>
        <dbReference type="Rhea" id="RHEA:21248"/>
        <dbReference type="Rhea" id="RHEA-COMP:14527"/>
        <dbReference type="Rhea" id="RHEA-COMP:17342"/>
        <dbReference type="ChEBI" id="CHEBI:33019"/>
        <dbReference type="ChEBI" id="CHEBI:61557"/>
        <dbReference type="ChEBI" id="CHEBI:140395"/>
        <dbReference type="EC" id="2.7.7.6"/>
    </reaction>
</comment>
<comment type="subunit">
    <text evidence="1">The RNAP catalytic core consists of 2 alpha, 1 beta, 1 beta' and 1 omega subunit. When a sigma factor is associated with the core the holoenzyme is formed, which can initiate transcription.</text>
</comment>
<comment type="similarity">
    <text evidence="1">Belongs to the RNA polymerase beta chain family.</text>
</comment>
<evidence type="ECO:0000255" key="1">
    <source>
        <dbReference type="HAMAP-Rule" id="MF_01321"/>
    </source>
</evidence>
<sequence length="1368" mass="152724">MAYSFTEKKRIRKSFAKRATVHQVPFLLATQIESYTQFLQAETPTARRKTEGLQAAFNAIFPISSHNGLARMEFVSYHLSNPPFDVKECQQRGLTFHSALRAKVRLIINDRENPGKVKEVKEQEVYMGEIPLMTSTGSFVINGTERVIVSQLHRSPGVFFEHDKGKTHSSGKLLFSARIIPYRGSWLDFEFDPKDILYFRVDRRRKMPVTILLKSIGLTPEQILAHFFVFDNFTLQAEGAQLEFVPERLRGEVARFDIADKNGRVVVEKDKRINAKHIRDLDSAGTKLISVPEDYLLGRVLAKNIIDPDTGEVIANANDELTETLLENLREAGVKQIQTLYTNDLDQGPYMSQTLRVDETADQTAARIAIYRMMRPGEPPTEEAVEALFQRLFYSEESYDLSRVGRMKVNSRLGRPSGEGAMVLQDEDILETIKILVNLRNGKGEVDDIDHLGNRRVRCVGELAENQFRAGLSRVERAVKERLGQAETENLMPHDLINSKPISSAIREFFGSSQLSQFMDQTNPLSEITHKRRVSALGPGGLTRERAGFEVRDVHPTHYGRVCPIETPEGPNIGLINSLALYARLNEYGFLETPYRKVVDSKLTDQVDYLSAIEEGKYVVAQANATVDADGNLTDELVSAREGSERETRMVTPDRVQYIDVAPSQIVSAAASLVPFLEHDDANRALMGANMQRQAVPCLRPDKPLVGTGIERTVAVDSGTAVQAMRGGVVDYVDAMRIVIRVNDDEAVAGEVGVDIYNLIKYTRSNQNTNINQRPMVKVGDHVARGDVIADGASTDLGELALGQNMLVAFMPWNGYNFEDSILISERVVAEDRYTSIHIEELSVVARDTKLGPEEITRDISNLAEAQLARLDESGITYIGAEVEAGDVLVGKVTPKGETQLTPEEKLLRAIFGEKASDVKDTSLRVPSGMSGIVIDVQVFTREGVTRDKRAQSIIDDELKRYRLDLNDQLRIVEGDAFQRLERLLIDKTVNGGPKKLAKGAKITKEYLADIDRYHWFDIRPADEELAAQLEAVKEAIEQKRHEFDLAFEEKRKKLTQGDELPPGVIKMVKVYLAVKRRLQPGDKMAGRHGNKGVVSKITPIEDMPYMADGTPADIVLNPLGVPSRMNVGQILETHLGWAARGLGERIGNMLKAQAKAAEVRKLLTQIYNESGKVEDLDSLSDSEVLELAENLKKGVPFATPVFDGAHEDEIRRMLDLAYPEEIAKEKGLTASKQQVTLFDGRTGEAFERPVTLGVMHMLKLHHLVDDKMHARSTGPYSLVTQQPLGGKAQFGGQRFGEMEVWALEAYGASYVLQEMLTVKSDDVNGRTKVYENIVKGEHSIDAGMPESFNVLVKEIRSLGIDIDLDRY</sequence>